<feature type="chain" id="PRO_0000340496" description="Urease accessory protein UreD 1">
    <location>
        <begin position="1"/>
        <end position="302"/>
    </location>
</feature>
<reference key="1">
    <citation type="submission" date="2006-03" db="EMBL/GenBank/DDBJ databases">
        <title>Complete sequence of chromosome of Psychrobacter cryohalolentis K5.</title>
        <authorList>
            <consortium name="US DOE Joint Genome Institute"/>
            <person name="Copeland A."/>
            <person name="Lucas S."/>
            <person name="Lapidus A."/>
            <person name="Barry K."/>
            <person name="Detter J.C."/>
            <person name="Glavina T."/>
            <person name="Hammon N."/>
            <person name="Israni S."/>
            <person name="Dalin E."/>
            <person name="Tice H."/>
            <person name="Pitluck S."/>
            <person name="Brettin T."/>
            <person name="Bruce D."/>
            <person name="Han C."/>
            <person name="Tapia R."/>
            <person name="Sims D.R."/>
            <person name="Gilna P."/>
            <person name="Schmutz J."/>
            <person name="Larimer F."/>
            <person name="Land M."/>
            <person name="Hauser L."/>
            <person name="Kyrpides N."/>
            <person name="Kim E."/>
            <person name="Richardson P."/>
        </authorList>
    </citation>
    <scope>NUCLEOTIDE SEQUENCE [LARGE SCALE GENOMIC DNA]</scope>
    <source>
        <strain>ATCC BAA-1226 / DSM 17306 / VKM B-2378 / K5</strain>
    </source>
</reference>
<proteinExistence type="inferred from homology"/>
<name>URED1_PSYCK</name>
<protein>
    <recommendedName>
        <fullName evidence="1">Urease accessory protein UreD 1</fullName>
    </recommendedName>
</protein>
<sequence length="302" mass="33864">MTILFSMPVHPQPIIDSGHRFDASRHWPASLTLGFAAYPEADTRITRMNVARHYGPLRVQRAFYPEGRDGCCHVYLLHPPGGIASGDSLTIDVTVSENAHALLTTPAANKLYRADSNNVAWTQHTHLKVEDGATLEWLPQETLAFDGSRGEQTVIIDLAETAKCLGWEIIGLGRPASDLPYVSGMIEQRFQLSQKGRPLWLERQAIDPTHPRFLGKWGQGGATVHATLWAVGLSDPADTITELRDKIPANHNWAVTYRRGVLLLRYLGMERNEAWDLLQQAREILRPRLMDVKAVTPRIWLT</sequence>
<evidence type="ECO:0000255" key="1">
    <source>
        <dbReference type="HAMAP-Rule" id="MF_01384"/>
    </source>
</evidence>
<organism>
    <name type="scientific">Psychrobacter cryohalolentis (strain ATCC BAA-1226 / DSM 17306 / VKM B-2378 / K5)</name>
    <dbReference type="NCBI Taxonomy" id="335284"/>
    <lineage>
        <taxon>Bacteria</taxon>
        <taxon>Pseudomonadati</taxon>
        <taxon>Pseudomonadota</taxon>
        <taxon>Gammaproteobacteria</taxon>
        <taxon>Moraxellales</taxon>
        <taxon>Moraxellaceae</taxon>
        <taxon>Psychrobacter</taxon>
    </lineage>
</organism>
<keyword id="KW-0143">Chaperone</keyword>
<keyword id="KW-0963">Cytoplasm</keyword>
<keyword id="KW-0996">Nickel insertion</keyword>
<comment type="function">
    <text evidence="1">Required for maturation of urease via the functional incorporation of the urease nickel metallocenter.</text>
</comment>
<comment type="subunit">
    <text evidence="1">UreD, UreF and UreG form a complex that acts as a GTP-hydrolysis-dependent molecular chaperone, activating the urease apoprotein by helping to assemble the nickel containing metallocenter of UreC. The UreE protein probably delivers the nickel.</text>
</comment>
<comment type="subcellular location">
    <subcellularLocation>
        <location evidence="1">Cytoplasm</location>
    </subcellularLocation>
</comment>
<comment type="similarity">
    <text evidence="1">Belongs to the UreD family.</text>
</comment>
<gene>
    <name evidence="1" type="primary">ureD1</name>
    <name type="ordered locus">Pcryo_0879</name>
</gene>
<accession>Q1QCE3</accession>
<dbReference type="EMBL" id="CP000323">
    <property type="protein sequence ID" value="ABE74660.1"/>
    <property type="molecule type" value="Genomic_DNA"/>
</dbReference>
<dbReference type="RefSeq" id="WP_011513221.1">
    <property type="nucleotide sequence ID" value="NC_007969.1"/>
</dbReference>
<dbReference type="SMR" id="Q1QCE3"/>
<dbReference type="STRING" id="335284.Pcryo_0879"/>
<dbReference type="KEGG" id="pcr:Pcryo_0879"/>
<dbReference type="eggNOG" id="COG0829">
    <property type="taxonomic scope" value="Bacteria"/>
</dbReference>
<dbReference type="HOGENOM" id="CLU_056339_0_0_6"/>
<dbReference type="Proteomes" id="UP000002425">
    <property type="component" value="Chromosome"/>
</dbReference>
<dbReference type="GO" id="GO:0005737">
    <property type="term" value="C:cytoplasm"/>
    <property type="evidence" value="ECO:0007669"/>
    <property type="project" value="UniProtKB-SubCell"/>
</dbReference>
<dbReference type="GO" id="GO:0016151">
    <property type="term" value="F:nickel cation binding"/>
    <property type="evidence" value="ECO:0007669"/>
    <property type="project" value="UniProtKB-UniRule"/>
</dbReference>
<dbReference type="HAMAP" id="MF_01384">
    <property type="entry name" value="UreD"/>
    <property type="match status" value="1"/>
</dbReference>
<dbReference type="InterPro" id="IPR002669">
    <property type="entry name" value="UreD"/>
</dbReference>
<dbReference type="PANTHER" id="PTHR33643">
    <property type="entry name" value="UREASE ACCESSORY PROTEIN D"/>
    <property type="match status" value="1"/>
</dbReference>
<dbReference type="PANTHER" id="PTHR33643:SF1">
    <property type="entry name" value="UREASE ACCESSORY PROTEIN D"/>
    <property type="match status" value="1"/>
</dbReference>
<dbReference type="Pfam" id="PF01774">
    <property type="entry name" value="UreD"/>
    <property type="match status" value="1"/>
</dbReference>